<sequence length="469" mass="52480">MKDLRMVFKSRITNIHFVGIAGSGMSGIAEVLHNLGYGVSGSDISQNKITDRLKEMGCQIYYKHHQDNIKNAQAVVISSAIKDNNPEVIKAHQLNIPIVPRAEMLAELMRFRFGIAIAGTHGKTTTTSIITHILNMAELDPTYIIGGILNSSGINAKLGESDYLIAEADESDASFLHLQSMLSVITNIDHEHMATYNNDYQKLKDAFVSFSANLPFYGTCIICIDDKGVNEILSDIHRPIITYGFNNGADIQAINIKQVDMQMHFDIIYDKYTKPFPIKLNLIGKHNILNTLAAIGICCELNIKVNIIQKALANFSGVARRLDYHGKLNINNLQISLFDDYGHHPKEISAVFESLKDTYQNKRLVVIFQPHRYSRTHDLFDNFTRILSTADALILLDIYPAQEKPIAHINSSTLADAIRKYSSLNPVVIKNQKKILDILPNIVHNNDVLLTLGAGDIHTLPELLKFNYT</sequence>
<evidence type="ECO:0000255" key="1">
    <source>
        <dbReference type="HAMAP-Rule" id="MF_00046"/>
    </source>
</evidence>
<organism>
    <name type="scientific">Vesicomyosocius okutanii subsp. Calyptogena okutanii (strain HA)</name>
    <dbReference type="NCBI Taxonomy" id="412965"/>
    <lineage>
        <taxon>Bacteria</taxon>
        <taxon>Pseudomonadati</taxon>
        <taxon>Pseudomonadota</taxon>
        <taxon>Gammaproteobacteria</taxon>
        <taxon>Candidatus Pseudothioglobaceae</taxon>
        <taxon>Candidatus Vesicomyosocius</taxon>
    </lineage>
</organism>
<feature type="chain" id="PRO_1000004434" description="UDP-N-acetylmuramate--L-alanine ligase">
    <location>
        <begin position="1"/>
        <end position="469"/>
    </location>
</feature>
<feature type="binding site" evidence="1">
    <location>
        <begin position="119"/>
        <end position="125"/>
    </location>
    <ligand>
        <name>ATP</name>
        <dbReference type="ChEBI" id="CHEBI:30616"/>
    </ligand>
</feature>
<keyword id="KW-0067">ATP-binding</keyword>
<keyword id="KW-0131">Cell cycle</keyword>
<keyword id="KW-0132">Cell division</keyword>
<keyword id="KW-0133">Cell shape</keyword>
<keyword id="KW-0961">Cell wall biogenesis/degradation</keyword>
<keyword id="KW-0963">Cytoplasm</keyword>
<keyword id="KW-0436">Ligase</keyword>
<keyword id="KW-0547">Nucleotide-binding</keyword>
<keyword id="KW-0573">Peptidoglycan synthesis</keyword>
<keyword id="KW-1185">Reference proteome</keyword>
<protein>
    <recommendedName>
        <fullName evidence="1">UDP-N-acetylmuramate--L-alanine ligase</fullName>
        <ecNumber evidence="1">6.3.2.8</ecNumber>
    </recommendedName>
    <alternativeName>
        <fullName evidence="1">UDP-N-acetylmuramoyl-L-alanine synthetase</fullName>
    </alternativeName>
</protein>
<gene>
    <name evidence="1" type="primary">murC</name>
    <name type="ordered locus">COSY_0699</name>
</gene>
<proteinExistence type="inferred from homology"/>
<name>MURC_VESOH</name>
<accession>A5CW53</accession>
<dbReference type="EC" id="6.3.2.8" evidence="1"/>
<dbReference type="EMBL" id="AP009247">
    <property type="protein sequence ID" value="BAF61811.1"/>
    <property type="molecule type" value="Genomic_DNA"/>
</dbReference>
<dbReference type="RefSeq" id="WP_011930081.1">
    <property type="nucleotide sequence ID" value="NC_009465.1"/>
</dbReference>
<dbReference type="SMR" id="A5CW53"/>
<dbReference type="STRING" id="412965.COSY_0699"/>
<dbReference type="KEGG" id="vok:COSY_0699"/>
<dbReference type="eggNOG" id="COG0773">
    <property type="taxonomic scope" value="Bacteria"/>
</dbReference>
<dbReference type="HOGENOM" id="CLU_028104_2_2_6"/>
<dbReference type="OrthoDB" id="9804126at2"/>
<dbReference type="UniPathway" id="UPA00219"/>
<dbReference type="Proteomes" id="UP000000247">
    <property type="component" value="Chromosome"/>
</dbReference>
<dbReference type="GO" id="GO:0005737">
    <property type="term" value="C:cytoplasm"/>
    <property type="evidence" value="ECO:0007669"/>
    <property type="project" value="UniProtKB-SubCell"/>
</dbReference>
<dbReference type="GO" id="GO:0005524">
    <property type="term" value="F:ATP binding"/>
    <property type="evidence" value="ECO:0007669"/>
    <property type="project" value="UniProtKB-UniRule"/>
</dbReference>
<dbReference type="GO" id="GO:0008763">
    <property type="term" value="F:UDP-N-acetylmuramate-L-alanine ligase activity"/>
    <property type="evidence" value="ECO:0007669"/>
    <property type="project" value="UniProtKB-UniRule"/>
</dbReference>
<dbReference type="GO" id="GO:0051301">
    <property type="term" value="P:cell division"/>
    <property type="evidence" value="ECO:0007669"/>
    <property type="project" value="UniProtKB-KW"/>
</dbReference>
<dbReference type="GO" id="GO:0071555">
    <property type="term" value="P:cell wall organization"/>
    <property type="evidence" value="ECO:0007669"/>
    <property type="project" value="UniProtKB-KW"/>
</dbReference>
<dbReference type="GO" id="GO:0009252">
    <property type="term" value="P:peptidoglycan biosynthetic process"/>
    <property type="evidence" value="ECO:0007669"/>
    <property type="project" value="UniProtKB-UniRule"/>
</dbReference>
<dbReference type="GO" id="GO:0008360">
    <property type="term" value="P:regulation of cell shape"/>
    <property type="evidence" value="ECO:0007669"/>
    <property type="project" value="UniProtKB-KW"/>
</dbReference>
<dbReference type="Gene3D" id="3.90.190.20">
    <property type="entry name" value="Mur ligase, C-terminal domain"/>
    <property type="match status" value="1"/>
</dbReference>
<dbReference type="Gene3D" id="3.40.1190.10">
    <property type="entry name" value="Mur-like, catalytic domain"/>
    <property type="match status" value="1"/>
</dbReference>
<dbReference type="Gene3D" id="3.40.50.720">
    <property type="entry name" value="NAD(P)-binding Rossmann-like Domain"/>
    <property type="match status" value="1"/>
</dbReference>
<dbReference type="HAMAP" id="MF_00046">
    <property type="entry name" value="MurC"/>
    <property type="match status" value="1"/>
</dbReference>
<dbReference type="InterPro" id="IPR036565">
    <property type="entry name" value="Mur-like_cat_sf"/>
</dbReference>
<dbReference type="InterPro" id="IPR004101">
    <property type="entry name" value="Mur_ligase_C"/>
</dbReference>
<dbReference type="InterPro" id="IPR036615">
    <property type="entry name" value="Mur_ligase_C_dom_sf"/>
</dbReference>
<dbReference type="InterPro" id="IPR013221">
    <property type="entry name" value="Mur_ligase_cen"/>
</dbReference>
<dbReference type="InterPro" id="IPR000713">
    <property type="entry name" value="Mur_ligase_N"/>
</dbReference>
<dbReference type="InterPro" id="IPR050061">
    <property type="entry name" value="MurCDEF_pg_biosynth"/>
</dbReference>
<dbReference type="InterPro" id="IPR005758">
    <property type="entry name" value="UDP-N-AcMur_Ala_ligase_MurC"/>
</dbReference>
<dbReference type="NCBIfam" id="TIGR01082">
    <property type="entry name" value="murC"/>
    <property type="match status" value="1"/>
</dbReference>
<dbReference type="PANTHER" id="PTHR43445:SF3">
    <property type="entry name" value="UDP-N-ACETYLMURAMATE--L-ALANINE LIGASE"/>
    <property type="match status" value="1"/>
</dbReference>
<dbReference type="PANTHER" id="PTHR43445">
    <property type="entry name" value="UDP-N-ACETYLMURAMATE--L-ALANINE LIGASE-RELATED"/>
    <property type="match status" value="1"/>
</dbReference>
<dbReference type="Pfam" id="PF01225">
    <property type="entry name" value="Mur_ligase"/>
    <property type="match status" value="1"/>
</dbReference>
<dbReference type="Pfam" id="PF02875">
    <property type="entry name" value="Mur_ligase_C"/>
    <property type="match status" value="1"/>
</dbReference>
<dbReference type="Pfam" id="PF08245">
    <property type="entry name" value="Mur_ligase_M"/>
    <property type="match status" value="1"/>
</dbReference>
<dbReference type="SUPFAM" id="SSF51984">
    <property type="entry name" value="MurCD N-terminal domain"/>
    <property type="match status" value="1"/>
</dbReference>
<dbReference type="SUPFAM" id="SSF53623">
    <property type="entry name" value="MurD-like peptide ligases, catalytic domain"/>
    <property type="match status" value="1"/>
</dbReference>
<dbReference type="SUPFAM" id="SSF53244">
    <property type="entry name" value="MurD-like peptide ligases, peptide-binding domain"/>
    <property type="match status" value="1"/>
</dbReference>
<reference key="1">
    <citation type="journal article" date="2007" name="Curr. Biol.">
        <title>Reduced genome of the thioautotrophic intracellular symbiont in a deep-sea clam, Calyptogena okutanii.</title>
        <authorList>
            <person name="Kuwahara H."/>
            <person name="Yoshida T."/>
            <person name="Takaki Y."/>
            <person name="Shimamura S."/>
            <person name="Nishi S."/>
            <person name="Harada M."/>
            <person name="Matsuyama K."/>
            <person name="Takishita K."/>
            <person name="Kawato M."/>
            <person name="Uematsu K."/>
            <person name="Fujiwara Y."/>
            <person name="Sato T."/>
            <person name="Kato C."/>
            <person name="Kitagawa M."/>
            <person name="Kato I."/>
            <person name="Maruyama T."/>
        </authorList>
    </citation>
    <scope>NUCLEOTIDE SEQUENCE [LARGE SCALE GENOMIC DNA]</scope>
    <source>
        <strain>HA</strain>
    </source>
</reference>
<comment type="function">
    <text evidence="1">Cell wall formation.</text>
</comment>
<comment type="catalytic activity">
    <reaction evidence="1">
        <text>UDP-N-acetyl-alpha-D-muramate + L-alanine + ATP = UDP-N-acetyl-alpha-D-muramoyl-L-alanine + ADP + phosphate + H(+)</text>
        <dbReference type="Rhea" id="RHEA:23372"/>
        <dbReference type="ChEBI" id="CHEBI:15378"/>
        <dbReference type="ChEBI" id="CHEBI:30616"/>
        <dbReference type="ChEBI" id="CHEBI:43474"/>
        <dbReference type="ChEBI" id="CHEBI:57972"/>
        <dbReference type="ChEBI" id="CHEBI:70757"/>
        <dbReference type="ChEBI" id="CHEBI:83898"/>
        <dbReference type="ChEBI" id="CHEBI:456216"/>
        <dbReference type="EC" id="6.3.2.8"/>
    </reaction>
</comment>
<comment type="pathway">
    <text evidence="1">Cell wall biogenesis; peptidoglycan biosynthesis.</text>
</comment>
<comment type="subcellular location">
    <subcellularLocation>
        <location evidence="1">Cytoplasm</location>
    </subcellularLocation>
</comment>
<comment type="similarity">
    <text evidence="1">Belongs to the MurCDEF family.</text>
</comment>